<reference key="1">
    <citation type="submission" date="2004-11" db="EMBL/GenBank/DDBJ databases">
        <authorList>
            <consortium name="The German cDNA consortium"/>
        </authorList>
    </citation>
    <scope>NUCLEOTIDE SEQUENCE [LARGE SCALE MRNA]</scope>
    <source>
        <tissue>Brain cortex</tissue>
    </source>
</reference>
<feature type="chain" id="PRO_0000364346" description="Casein kinase I isoform gamma-3">
    <location>
        <begin position="1"/>
        <end position="456"/>
    </location>
</feature>
<feature type="domain" description="Protein kinase" evidence="3">
    <location>
        <begin position="43"/>
        <end position="314"/>
    </location>
</feature>
<feature type="region of interest" description="Disordered" evidence="5">
    <location>
        <begin position="1"/>
        <end position="35"/>
    </location>
</feature>
<feature type="region of interest" description="Disordered" evidence="5">
    <location>
        <begin position="342"/>
        <end position="375"/>
    </location>
</feature>
<feature type="region of interest" description="Disordered" evidence="5">
    <location>
        <begin position="392"/>
        <end position="418"/>
    </location>
</feature>
<feature type="compositionally biased region" description="Basic and acidic residues" evidence="5">
    <location>
        <begin position="1"/>
        <end position="16"/>
    </location>
</feature>
<feature type="compositionally biased region" description="Polar residues" evidence="5">
    <location>
        <begin position="22"/>
        <end position="35"/>
    </location>
</feature>
<feature type="compositionally biased region" description="Basic and acidic residues" evidence="5">
    <location>
        <begin position="348"/>
        <end position="370"/>
    </location>
</feature>
<feature type="compositionally biased region" description="Polar residues" evidence="5">
    <location>
        <begin position="395"/>
        <end position="417"/>
    </location>
</feature>
<feature type="active site" description="Proton acceptor" evidence="3 4">
    <location>
        <position position="162"/>
    </location>
</feature>
<feature type="binding site" evidence="3">
    <location>
        <begin position="49"/>
        <end position="57"/>
    </location>
    <ligand>
        <name>ATP</name>
        <dbReference type="ChEBI" id="CHEBI:30616"/>
    </ligand>
</feature>
<feature type="binding site" evidence="3">
    <location>
        <position position="72"/>
    </location>
    <ligand>
        <name>ATP</name>
        <dbReference type="ChEBI" id="CHEBI:30616"/>
    </ligand>
</feature>
<feature type="modified residue" description="N-acetylmethionine" evidence="2">
    <location>
        <position position="1"/>
    </location>
</feature>
<feature type="modified residue" description="Phosphoserine" evidence="2">
    <location>
        <position position="414"/>
    </location>
</feature>
<organism>
    <name type="scientific">Pongo abelii</name>
    <name type="common">Sumatran orangutan</name>
    <name type="synonym">Pongo pygmaeus abelii</name>
    <dbReference type="NCBI Taxonomy" id="9601"/>
    <lineage>
        <taxon>Eukaryota</taxon>
        <taxon>Metazoa</taxon>
        <taxon>Chordata</taxon>
        <taxon>Craniata</taxon>
        <taxon>Vertebrata</taxon>
        <taxon>Euteleostomi</taxon>
        <taxon>Mammalia</taxon>
        <taxon>Eutheria</taxon>
        <taxon>Euarchontoglires</taxon>
        <taxon>Primates</taxon>
        <taxon>Haplorrhini</taxon>
        <taxon>Catarrhini</taxon>
        <taxon>Hominidae</taxon>
        <taxon>Pongo</taxon>
    </lineage>
</organism>
<gene>
    <name type="primary">CSNK1G3</name>
</gene>
<proteinExistence type="evidence at transcript level"/>
<name>KC1G3_PONAB</name>
<sequence>MENKKKDKDKSDDRMARPSGRSGHNTRGTGSSSSGVLMVGPNFRVGKKIGCGNFGELRLGKNLYTNEYVAIKLEPMKSRAPQLHLEYRFYKQLGSGDGIPQVYYFGPCGKYNAMVLELLGPSLEDLFDLCDRTFSLKTVLMIAIQLISRMEYVHSKNLIYRDVKPENFLIGRPGNKTQQVIHIIDFGLAKEYIDPETKKHIPYREHKSLTGTARHMSINTHLGKEQSRRDDLEALGHMFMYFLRGSLPWQGLKADTLKERYQKIGDTKRATPIEVLCENFPEEMATYLRYVRRLDFFEKPDYDYLRKLFTDLFDRKGYMFDYEYDWIGKQLPTPVGAVQQDPALSSNREAHQHRDKMQQSKNQSADHRAAWDSQQANPHHLRAHLAADRHGGSVQVVSSTNGELNTDDPTAGRSNAPITAPTEVEVMDETNCQKVLNMWCCCFFKRRKRKTIQRHK</sequence>
<protein>
    <recommendedName>
        <fullName>Casein kinase I isoform gamma-3</fullName>
        <shortName>CKI-gamma 3</shortName>
        <ecNumber>2.7.11.1</ecNumber>
    </recommendedName>
</protein>
<evidence type="ECO:0000250" key="1"/>
<evidence type="ECO:0000250" key="2">
    <source>
        <dbReference type="UniProtKB" id="Q9Y6M4"/>
    </source>
</evidence>
<evidence type="ECO:0000255" key="3">
    <source>
        <dbReference type="PROSITE-ProRule" id="PRU00159"/>
    </source>
</evidence>
<evidence type="ECO:0000255" key="4">
    <source>
        <dbReference type="PROSITE-ProRule" id="PRU10027"/>
    </source>
</evidence>
<evidence type="ECO:0000256" key="5">
    <source>
        <dbReference type="SAM" id="MobiDB-lite"/>
    </source>
</evidence>
<evidence type="ECO:0000305" key="6"/>
<comment type="function">
    <text evidence="1">Serine/threonine-protein kinase. Casein kinases are operationally defined by their preferential utilization of acidic proteins such as caseins as substrates. It can phosphorylate a large number of proteins. Participates in Wnt signaling. Regulates fast synaptic transmission mediated by glutamate (By similarity).</text>
</comment>
<comment type="catalytic activity">
    <reaction>
        <text>L-seryl-[protein] + ATP = O-phospho-L-seryl-[protein] + ADP + H(+)</text>
        <dbReference type="Rhea" id="RHEA:17989"/>
        <dbReference type="Rhea" id="RHEA-COMP:9863"/>
        <dbReference type="Rhea" id="RHEA-COMP:11604"/>
        <dbReference type="ChEBI" id="CHEBI:15378"/>
        <dbReference type="ChEBI" id="CHEBI:29999"/>
        <dbReference type="ChEBI" id="CHEBI:30616"/>
        <dbReference type="ChEBI" id="CHEBI:83421"/>
        <dbReference type="ChEBI" id="CHEBI:456216"/>
        <dbReference type="EC" id="2.7.11.1"/>
    </reaction>
</comment>
<comment type="catalytic activity">
    <reaction>
        <text>L-threonyl-[protein] + ATP = O-phospho-L-threonyl-[protein] + ADP + H(+)</text>
        <dbReference type="Rhea" id="RHEA:46608"/>
        <dbReference type="Rhea" id="RHEA-COMP:11060"/>
        <dbReference type="Rhea" id="RHEA-COMP:11605"/>
        <dbReference type="ChEBI" id="CHEBI:15378"/>
        <dbReference type="ChEBI" id="CHEBI:30013"/>
        <dbReference type="ChEBI" id="CHEBI:30616"/>
        <dbReference type="ChEBI" id="CHEBI:61977"/>
        <dbReference type="ChEBI" id="CHEBI:456216"/>
        <dbReference type="EC" id="2.7.11.1"/>
    </reaction>
</comment>
<comment type="subunit">
    <text evidence="1">Monomer.</text>
</comment>
<comment type="subcellular location">
    <subcellularLocation>
        <location evidence="1">Cytoplasm</location>
    </subcellularLocation>
</comment>
<comment type="PTM">
    <text evidence="1">Autophosphorylated.</text>
</comment>
<comment type="miscellaneous">
    <text>Triazolodiamine 1 is a commercial name for 5-amino-3-([4-(aminosulfonyl)phenyl]amino)-N-(2,6-difluorophenyl)-1H-1,2,4-triazole-1-carbothioamide.</text>
</comment>
<comment type="similarity">
    <text evidence="6">Belongs to the protein kinase superfamily. CK1 Ser/Thr protein kinase family. Casein kinase I subfamily.</text>
</comment>
<accession>Q5R4V3</accession>
<dbReference type="EC" id="2.7.11.1"/>
<dbReference type="EMBL" id="CR861138">
    <property type="protein sequence ID" value="CAH93213.1"/>
    <property type="molecule type" value="mRNA"/>
</dbReference>
<dbReference type="RefSeq" id="NP_001126890.1">
    <property type="nucleotide sequence ID" value="NM_001133418.1"/>
</dbReference>
<dbReference type="SMR" id="Q5R4V3"/>
<dbReference type="FunCoup" id="Q5R4V3">
    <property type="interactions" value="3471"/>
</dbReference>
<dbReference type="STRING" id="9601.ENSPPYP00000017584"/>
<dbReference type="GeneID" id="100173905"/>
<dbReference type="KEGG" id="pon:100173905"/>
<dbReference type="CTD" id="1456"/>
<dbReference type="eggNOG" id="KOG1165">
    <property type="taxonomic scope" value="Eukaryota"/>
</dbReference>
<dbReference type="InParanoid" id="Q5R4V3"/>
<dbReference type="OrthoDB" id="5800476at2759"/>
<dbReference type="Proteomes" id="UP000001595">
    <property type="component" value="Unplaced"/>
</dbReference>
<dbReference type="GO" id="GO:0005737">
    <property type="term" value="C:cytoplasm"/>
    <property type="evidence" value="ECO:0007669"/>
    <property type="project" value="UniProtKB-SubCell"/>
</dbReference>
<dbReference type="GO" id="GO:0005524">
    <property type="term" value="F:ATP binding"/>
    <property type="evidence" value="ECO:0007669"/>
    <property type="project" value="UniProtKB-KW"/>
</dbReference>
<dbReference type="GO" id="GO:0106310">
    <property type="term" value="F:protein serine kinase activity"/>
    <property type="evidence" value="ECO:0007669"/>
    <property type="project" value="RHEA"/>
</dbReference>
<dbReference type="GO" id="GO:0004674">
    <property type="term" value="F:protein serine/threonine kinase activity"/>
    <property type="evidence" value="ECO:0007669"/>
    <property type="project" value="UniProtKB-KW"/>
</dbReference>
<dbReference type="GO" id="GO:0016055">
    <property type="term" value="P:Wnt signaling pathway"/>
    <property type="evidence" value="ECO:0007669"/>
    <property type="project" value="UniProtKB-KW"/>
</dbReference>
<dbReference type="CDD" id="cd14126">
    <property type="entry name" value="STKc_CK1_gamma"/>
    <property type="match status" value="1"/>
</dbReference>
<dbReference type="FunFam" id="1.10.510.10:FF:001113">
    <property type="entry name" value="Casein kinase 1 gamma 2"/>
    <property type="match status" value="1"/>
</dbReference>
<dbReference type="FunFam" id="3.30.200.20:FF:000018">
    <property type="entry name" value="Casein kinase I isoform gamma-1"/>
    <property type="match status" value="1"/>
</dbReference>
<dbReference type="Gene3D" id="3.30.200.20">
    <property type="entry name" value="Phosphorylase Kinase, domain 1"/>
    <property type="match status" value="1"/>
</dbReference>
<dbReference type="Gene3D" id="1.10.510.10">
    <property type="entry name" value="Transferase(Phosphotransferase) domain 1"/>
    <property type="match status" value="1"/>
</dbReference>
<dbReference type="InterPro" id="IPR022247">
    <property type="entry name" value="Casein_kinase-1_gamma_C"/>
</dbReference>
<dbReference type="InterPro" id="IPR050235">
    <property type="entry name" value="CK1_Ser-Thr_kinase"/>
</dbReference>
<dbReference type="InterPro" id="IPR011009">
    <property type="entry name" value="Kinase-like_dom_sf"/>
</dbReference>
<dbReference type="InterPro" id="IPR000719">
    <property type="entry name" value="Prot_kinase_dom"/>
</dbReference>
<dbReference type="InterPro" id="IPR017441">
    <property type="entry name" value="Protein_kinase_ATP_BS"/>
</dbReference>
<dbReference type="InterPro" id="IPR008271">
    <property type="entry name" value="Ser/Thr_kinase_AS"/>
</dbReference>
<dbReference type="PANTHER" id="PTHR11909">
    <property type="entry name" value="CASEIN KINASE-RELATED"/>
    <property type="match status" value="1"/>
</dbReference>
<dbReference type="Pfam" id="PF12605">
    <property type="entry name" value="CK1gamma_C"/>
    <property type="match status" value="1"/>
</dbReference>
<dbReference type="Pfam" id="PF00069">
    <property type="entry name" value="Pkinase"/>
    <property type="match status" value="1"/>
</dbReference>
<dbReference type="SMART" id="SM00220">
    <property type="entry name" value="S_TKc"/>
    <property type="match status" value="1"/>
</dbReference>
<dbReference type="SUPFAM" id="SSF56112">
    <property type="entry name" value="Protein kinase-like (PK-like)"/>
    <property type="match status" value="1"/>
</dbReference>
<dbReference type="PROSITE" id="PS00107">
    <property type="entry name" value="PROTEIN_KINASE_ATP"/>
    <property type="match status" value="1"/>
</dbReference>
<dbReference type="PROSITE" id="PS50011">
    <property type="entry name" value="PROTEIN_KINASE_DOM"/>
    <property type="match status" value="1"/>
</dbReference>
<dbReference type="PROSITE" id="PS00108">
    <property type="entry name" value="PROTEIN_KINASE_ST"/>
    <property type="match status" value="1"/>
</dbReference>
<keyword id="KW-0007">Acetylation</keyword>
<keyword id="KW-0067">ATP-binding</keyword>
<keyword id="KW-0963">Cytoplasm</keyword>
<keyword id="KW-0418">Kinase</keyword>
<keyword id="KW-0547">Nucleotide-binding</keyword>
<keyword id="KW-0597">Phosphoprotein</keyword>
<keyword id="KW-1185">Reference proteome</keyword>
<keyword id="KW-0723">Serine/threonine-protein kinase</keyword>
<keyword id="KW-0808">Transferase</keyword>
<keyword id="KW-0879">Wnt signaling pathway</keyword>